<name>RL17_BACCQ</name>
<feature type="chain" id="PRO_1000183999" description="Large ribosomal subunit protein bL17">
    <location>
        <begin position="1"/>
        <end position="120"/>
    </location>
</feature>
<sequence length="120" mass="13450">MAYRKLGRTSAQRKAMLRDLATDLIINERIQTTETRAKELRSVVEKMITLGKRGDLHARRQAAAFIRNEVANAETGQDALQKLFADVAPRYAERQGGYTRIAKIGPRRGDAAPMVIIELV</sequence>
<evidence type="ECO:0000255" key="1">
    <source>
        <dbReference type="HAMAP-Rule" id="MF_01368"/>
    </source>
</evidence>
<evidence type="ECO:0000305" key="2"/>
<dbReference type="EMBL" id="CP000227">
    <property type="protein sequence ID" value="ACM10666.1"/>
    <property type="molecule type" value="Genomic_DNA"/>
</dbReference>
<dbReference type="SMR" id="B9IZM2"/>
<dbReference type="KEGG" id="bcq:BCQ_0151"/>
<dbReference type="HOGENOM" id="CLU_074407_2_2_9"/>
<dbReference type="Proteomes" id="UP000000441">
    <property type="component" value="Chromosome"/>
</dbReference>
<dbReference type="GO" id="GO:0022625">
    <property type="term" value="C:cytosolic large ribosomal subunit"/>
    <property type="evidence" value="ECO:0007669"/>
    <property type="project" value="TreeGrafter"/>
</dbReference>
<dbReference type="GO" id="GO:0003735">
    <property type="term" value="F:structural constituent of ribosome"/>
    <property type="evidence" value="ECO:0007669"/>
    <property type="project" value="InterPro"/>
</dbReference>
<dbReference type="GO" id="GO:0006412">
    <property type="term" value="P:translation"/>
    <property type="evidence" value="ECO:0007669"/>
    <property type="project" value="UniProtKB-UniRule"/>
</dbReference>
<dbReference type="FunFam" id="3.90.1030.10:FF:000002">
    <property type="entry name" value="50S ribosomal protein L17"/>
    <property type="match status" value="1"/>
</dbReference>
<dbReference type="Gene3D" id="3.90.1030.10">
    <property type="entry name" value="Ribosomal protein L17"/>
    <property type="match status" value="1"/>
</dbReference>
<dbReference type="HAMAP" id="MF_01368">
    <property type="entry name" value="Ribosomal_bL17"/>
    <property type="match status" value="1"/>
</dbReference>
<dbReference type="InterPro" id="IPR000456">
    <property type="entry name" value="Ribosomal_bL17"/>
</dbReference>
<dbReference type="InterPro" id="IPR047859">
    <property type="entry name" value="Ribosomal_bL17_CS"/>
</dbReference>
<dbReference type="InterPro" id="IPR036373">
    <property type="entry name" value="Ribosomal_bL17_sf"/>
</dbReference>
<dbReference type="NCBIfam" id="TIGR00059">
    <property type="entry name" value="L17"/>
    <property type="match status" value="1"/>
</dbReference>
<dbReference type="PANTHER" id="PTHR14413:SF16">
    <property type="entry name" value="LARGE RIBOSOMAL SUBUNIT PROTEIN BL17M"/>
    <property type="match status" value="1"/>
</dbReference>
<dbReference type="PANTHER" id="PTHR14413">
    <property type="entry name" value="RIBOSOMAL PROTEIN L17"/>
    <property type="match status" value="1"/>
</dbReference>
<dbReference type="Pfam" id="PF01196">
    <property type="entry name" value="Ribosomal_L17"/>
    <property type="match status" value="1"/>
</dbReference>
<dbReference type="SUPFAM" id="SSF64263">
    <property type="entry name" value="Prokaryotic ribosomal protein L17"/>
    <property type="match status" value="1"/>
</dbReference>
<dbReference type="PROSITE" id="PS01167">
    <property type="entry name" value="RIBOSOMAL_L17"/>
    <property type="match status" value="1"/>
</dbReference>
<protein>
    <recommendedName>
        <fullName evidence="1">Large ribosomal subunit protein bL17</fullName>
    </recommendedName>
    <alternativeName>
        <fullName evidence="2">50S ribosomal protein L17</fullName>
    </alternativeName>
</protein>
<keyword id="KW-0687">Ribonucleoprotein</keyword>
<keyword id="KW-0689">Ribosomal protein</keyword>
<proteinExistence type="inferred from homology"/>
<reference key="1">
    <citation type="journal article" date="2009" name="J. Bacteriol.">
        <title>Complete genome sequence of the extremophilic Bacillus cereus strain Q1 with industrial applications.</title>
        <authorList>
            <person name="Xiong Z."/>
            <person name="Jiang Y."/>
            <person name="Qi D."/>
            <person name="Lu H."/>
            <person name="Yang F."/>
            <person name="Yang J."/>
            <person name="Chen L."/>
            <person name="Sun L."/>
            <person name="Xu X."/>
            <person name="Xue Y."/>
            <person name="Zhu Y."/>
            <person name="Jin Q."/>
        </authorList>
    </citation>
    <scope>NUCLEOTIDE SEQUENCE [LARGE SCALE GENOMIC DNA]</scope>
    <source>
        <strain>Q1</strain>
    </source>
</reference>
<organism>
    <name type="scientific">Bacillus cereus (strain Q1)</name>
    <dbReference type="NCBI Taxonomy" id="361100"/>
    <lineage>
        <taxon>Bacteria</taxon>
        <taxon>Bacillati</taxon>
        <taxon>Bacillota</taxon>
        <taxon>Bacilli</taxon>
        <taxon>Bacillales</taxon>
        <taxon>Bacillaceae</taxon>
        <taxon>Bacillus</taxon>
        <taxon>Bacillus cereus group</taxon>
    </lineage>
</organism>
<accession>B9IZM2</accession>
<comment type="subunit">
    <text evidence="1">Part of the 50S ribosomal subunit. Contacts protein L32.</text>
</comment>
<comment type="similarity">
    <text evidence="1">Belongs to the bacterial ribosomal protein bL17 family.</text>
</comment>
<gene>
    <name evidence="1" type="primary">rplQ</name>
    <name type="ordered locus">BCQ_0151</name>
</gene>